<sequence>MENITRELFDQYISRQAQLNRVSPAAVAAKFAVDPTVQQKLEAAAQESDSFLSKINVFGVTQQIGQKVLIGSKGPLAGVNNSTTTRRNPADNSKMEPYDYMCRKVNYDYGISYEQLDAWAHQPNFQPLISSAMARQMSLDRIMIGFNGTSYADPSNRAANPLLQDCGIGFLEKIRKEAPHRVISNITVTSRDEDNKIITKGTYGNVSAAVYDAKNSLMDEWHKRNPDNVVILAGDLLTTSNFPAINAMSQTNPNTEMLAGQLIVAQERVGNMPTFIAPFFPVNGILITPFKNLSIYYQRGGLRRTIKEEPEYNRVATYQSSNDDFVVEDYGNVAFIDGITFAQPENGG</sequence>
<feature type="propeptide" id="PRO_0000391686" evidence="2">
    <location>
        <begin position="1"/>
        <end position="31"/>
    </location>
</feature>
<feature type="chain" id="PRO_0000351154" description="Major capsid protein" evidence="2">
    <location>
        <begin position="32"/>
        <end position="348"/>
    </location>
</feature>
<name>CAPSD_BPSK2</name>
<comment type="subcellular location">
    <subcellularLocation>
        <location evidence="2">Virion</location>
    </subcellularLocation>
</comment>
<comment type="similarity">
    <text evidence="1">Belongs to the P2-like viruses major capsid protein family.</text>
</comment>
<accession>P85990</accession>
<accession>B9A7B5</accession>
<proteinExistence type="evidence at protein level"/>
<protein>
    <recommendedName>
        <fullName evidence="5">Major capsid protein</fullName>
    </recommendedName>
    <alternativeName>
        <fullName evidence="3">Major capsid protein B</fullName>
    </alternativeName>
    <alternativeName>
        <fullName evidence="4">Major head protein</fullName>
    </alternativeName>
</protein>
<keyword id="KW-0167">Capsid protein</keyword>
<keyword id="KW-0903">Direct protein sequencing</keyword>
<keyword id="KW-0946">Virion</keyword>
<reference evidence="4 5" key="1">
    <citation type="journal article" date="2009" name="FEMS Microbiol. Lett.">
        <title>Morphological and genetic analysis of three bacteriophages of Serratia marcescens isolated from environmental water.</title>
        <authorList>
            <person name="Matsushita K."/>
            <person name="Uchiyama J."/>
            <person name="Kato S."/>
            <person name="Ujihara T."/>
            <person name="Hoshiba H."/>
            <person name="Sugihara S."/>
            <person name="Muraoka A."/>
            <person name="Wakiguchi H."/>
            <person name="Matsuzaki S."/>
        </authorList>
    </citation>
    <scope>NUCLEOTIDE SEQUENCE [GENOMIC DNA]</scope>
    <scope>PROTEIN SEQUENCE OF 32-49</scope>
    <scope>SUBCELLULAR LOCATION</scope>
</reference>
<organismHost>
    <name type="scientific">Serratia marcescens</name>
    <dbReference type="NCBI Taxonomy" id="615"/>
</organismHost>
<organism>
    <name type="scientific">Serratia phage KSP20</name>
    <name type="common">Serratia marcescens bacteriophage KSP20</name>
    <dbReference type="NCBI Taxonomy" id="552527"/>
    <lineage>
        <taxon>Viruses</taxon>
        <taxon>Duplodnaviria</taxon>
        <taxon>Heunggongvirae</taxon>
        <taxon>Uroviricota</taxon>
        <taxon>Caudoviricetes</taxon>
        <taxon>Peduoviridae</taxon>
    </lineage>
</organism>
<dbReference type="EMBL" id="AB452989">
    <property type="protein sequence ID" value="BAH15161.1"/>
    <property type="molecule type" value="Genomic_DNA"/>
</dbReference>
<dbReference type="SMR" id="P85990"/>
<dbReference type="GO" id="GO:0019028">
    <property type="term" value="C:viral capsid"/>
    <property type="evidence" value="ECO:0007669"/>
    <property type="project" value="UniProtKB-KW"/>
</dbReference>
<dbReference type="InterPro" id="IPR006441">
    <property type="entry name" value="Phage_P2_GpN"/>
</dbReference>
<dbReference type="NCBIfam" id="TIGR01551">
    <property type="entry name" value="major_capsid_P2"/>
    <property type="match status" value="1"/>
</dbReference>
<dbReference type="Pfam" id="PF05125">
    <property type="entry name" value="Phage_cap_P2"/>
    <property type="match status" value="1"/>
</dbReference>
<evidence type="ECO:0000255" key="1"/>
<evidence type="ECO:0000269" key="2">
    <source>
    </source>
</evidence>
<evidence type="ECO:0000303" key="3">
    <source>
    </source>
</evidence>
<evidence type="ECO:0000305" key="4"/>
<evidence type="ECO:0000312" key="5">
    <source>
        <dbReference type="EMBL" id="BAH15161.1"/>
    </source>
</evidence>